<protein>
    <recommendedName>
        <fullName>2-octaprenylphenol hydroxylase</fullName>
        <ecNumber evidence="1">1.14.13.240</ecNumber>
    </recommendedName>
    <alternativeName>
        <fullName evidence="4">2-polyprenylphenol 6-hydroxylase</fullName>
    </alternativeName>
</protein>
<comment type="function">
    <text evidence="1">FAD-dependent monooxygenase required for the aerobic hydroxylation of 2-octaprenylphenol to 2-octaprenyl-6-hydroxy-phenol, the first hydroxylation step in coenzyme Q (ubiquinone) biosynthesis.</text>
</comment>
<comment type="catalytic activity">
    <reaction evidence="1">
        <text>2-all-trans-octaprenylphenol + NADPH + O2 + H(+) = 3-(all-trans-octaprenyl)benzene-1,2-diol + NADP(+) + H2O</text>
        <dbReference type="Rhea" id="RHEA:27790"/>
        <dbReference type="ChEBI" id="CHEBI:1233"/>
        <dbReference type="ChEBI" id="CHEBI:15377"/>
        <dbReference type="ChEBI" id="CHEBI:15378"/>
        <dbReference type="ChEBI" id="CHEBI:15379"/>
        <dbReference type="ChEBI" id="CHEBI:40407"/>
        <dbReference type="ChEBI" id="CHEBI:57783"/>
        <dbReference type="ChEBI" id="CHEBI:58349"/>
        <dbReference type="EC" id="1.14.13.240"/>
    </reaction>
</comment>
<comment type="catalytic activity">
    <reaction evidence="1">
        <text>a 2-(all-trans-polyprenyl)phenol + NADPH + O2 + H(+) = a 3-(all-trans-polyprenyl)benzene-1,2-diol + NADP(+) + H2O</text>
        <dbReference type="Rhea" id="RHEA:55892"/>
        <dbReference type="Rhea" id="RHEA-COMP:9516"/>
        <dbReference type="Rhea" id="RHEA-COMP:9550"/>
        <dbReference type="ChEBI" id="CHEBI:1269"/>
        <dbReference type="ChEBI" id="CHEBI:15377"/>
        <dbReference type="ChEBI" id="CHEBI:15378"/>
        <dbReference type="ChEBI" id="CHEBI:15379"/>
        <dbReference type="ChEBI" id="CHEBI:57783"/>
        <dbReference type="ChEBI" id="CHEBI:58349"/>
        <dbReference type="ChEBI" id="CHEBI:62729"/>
        <dbReference type="EC" id="1.14.13.240"/>
    </reaction>
</comment>
<comment type="cofactor">
    <cofactor evidence="5">
        <name>FAD</name>
        <dbReference type="ChEBI" id="CHEBI:57692"/>
    </cofactor>
</comment>
<comment type="pathway">
    <text evidence="1">Cofactor biosynthesis; ubiquinone biosynthesis.</text>
</comment>
<comment type="subunit">
    <text evidence="2 5">Homotetramer (Probable). Component of the Ubi complex metabolon, which regroups five ubiquinone biosynthesis proteins (UbiE, UbiF, UbiG, UbiH and UbiI) and two accessory factors (UbiK and the lipid-binding protein UbiJ) (PubMed:30686758).</text>
</comment>
<comment type="subcellular location">
    <subcellularLocation>
        <location evidence="2">Cytoplasm</location>
    </subcellularLocation>
</comment>
<comment type="disruption phenotype">
    <text evidence="1">Cells lacking this gene have a low level of coenzyme Q8 in aerobic conditions, and accumulate a compound derived from the Q biosynthetic pathway which was identified as 3-octaprenyl-4-hydroxyphenol. When grown anaerobically, they have a content of Q8 comparable with that in wild-type cells and do not accumulate 3-octaprenyl-4-hydroxyphenol. The levels of the isoprenoid naphthoquinones, demethylmenaquinone and menaquinone (MK8) are not affected in the deletion mutant under aerobic conditions.</text>
</comment>
<comment type="miscellaneous">
    <text evidence="5">Partially complements the C5-hydroxylation defect of S.cerevisiae cells lacking COQ6.</text>
</comment>
<comment type="similarity">
    <text evidence="4">Belongs to the UbiH/COQ6 family.</text>
</comment>
<feature type="chain" id="PRO_0000207580" description="2-octaprenylphenol hydroxylase">
    <location>
        <begin position="1"/>
        <end position="400"/>
    </location>
</feature>
<feature type="binding site" evidence="4">
    <location>
        <begin position="49"/>
        <end position="52"/>
    </location>
    <ligand>
        <name>FAD</name>
        <dbReference type="ChEBI" id="CHEBI:57692"/>
    </ligand>
</feature>
<feature type="binding site" evidence="4">
    <location>
        <begin position="297"/>
        <end position="303"/>
    </location>
    <ligand>
        <name>FAD</name>
        <dbReference type="ChEBI" id="CHEBI:57692"/>
    </ligand>
</feature>
<feature type="mutagenesis site" description="Leads to the same phenotype as the ubiI deletion mutant, indicating a strongly impaired catalytic activity." evidence="1">
    <original>GVN</original>
    <variation>AVD</variation>
    <location>
        <begin position="301"/>
        <end position="303"/>
    </location>
</feature>
<feature type="sequence conflict" description="In Ref. 1; BAA14327." evidence="4" ref="1">
    <original>G</original>
    <variation>A</variation>
    <location>
        <position position="26"/>
    </location>
</feature>
<feature type="sequence conflict" description="In Ref. 1; BAA14327." evidence="4" ref="1">
    <original>P</original>
    <variation>A</variation>
    <location>
        <position position="383"/>
    </location>
</feature>
<feature type="strand" evidence="6">
    <location>
        <begin position="2"/>
        <end position="9"/>
    </location>
</feature>
<feature type="helix" evidence="6">
    <location>
        <begin position="13"/>
        <end position="22"/>
    </location>
</feature>
<feature type="strand" evidence="6">
    <location>
        <begin position="29"/>
        <end position="32"/>
    </location>
</feature>
<feature type="strand" evidence="6">
    <location>
        <begin position="50"/>
        <end position="53"/>
    </location>
</feature>
<feature type="helix" evidence="6">
    <location>
        <begin position="55"/>
        <end position="63"/>
    </location>
</feature>
<feature type="helix" evidence="6">
    <location>
        <begin position="67"/>
        <end position="73"/>
    </location>
</feature>
<feature type="strand" evidence="6">
    <location>
        <begin position="76"/>
        <end position="78"/>
    </location>
</feature>
<feature type="strand" evidence="6">
    <location>
        <begin position="80"/>
        <end position="88"/>
    </location>
</feature>
<feature type="strand" evidence="6">
    <location>
        <begin position="91"/>
        <end position="96"/>
    </location>
</feature>
<feature type="helix" evidence="6">
    <location>
        <begin position="97"/>
        <end position="99"/>
    </location>
</feature>
<feature type="strand" evidence="6">
    <location>
        <begin position="102"/>
        <end position="109"/>
    </location>
</feature>
<feature type="helix" evidence="6">
    <location>
        <begin position="110"/>
        <end position="122"/>
    </location>
</feature>
<feature type="strand" evidence="6">
    <location>
        <begin position="127"/>
        <end position="132"/>
    </location>
</feature>
<feature type="strand" evidence="6">
    <location>
        <begin position="135"/>
        <end position="140"/>
    </location>
</feature>
<feature type="strand" evidence="6">
    <location>
        <begin position="145"/>
        <end position="149"/>
    </location>
</feature>
<feature type="strand" evidence="6">
    <location>
        <begin position="154"/>
        <end position="162"/>
    </location>
</feature>
<feature type="helix" evidence="6">
    <location>
        <begin position="168"/>
        <end position="173"/>
    </location>
</feature>
<feature type="strand" evidence="6">
    <location>
        <begin position="179"/>
        <end position="196"/>
    </location>
</feature>
<feature type="strand" evidence="6">
    <location>
        <begin position="201"/>
        <end position="207"/>
    </location>
</feature>
<feature type="strand" evidence="6">
    <location>
        <begin position="210"/>
        <end position="216"/>
    </location>
</feature>
<feature type="strand" evidence="6">
    <location>
        <begin position="222"/>
        <end position="229"/>
    </location>
</feature>
<feature type="helix" evidence="6">
    <location>
        <begin position="231"/>
        <end position="239"/>
    </location>
</feature>
<feature type="helix" evidence="6">
    <location>
        <begin position="242"/>
        <end position="252"/>
    </location>
</feature>
<feature type="turn" evidence="6">
    <location>
        <begin position="253"/>
        <end position="257"/>
    </location>
</feature>
<feature type="strand" evidence="6">
    <location>
        <begin position="258"/>
        <end position="262"/>
    </location>
</feature>
<feature type="strand" evidence="6">
    <location>
        <begin position="267"/>
        <end position="275"/>
    </location>
</feature>
<feature type="strand" evidence="6">
    <location>
        <begin position="279"/>
        <end position="281"/>
    </location>
</feature>
<feature type="strand" evidence="6">
    <location>
        <begin position="284"/>
        <end position="286"/>
    </location>
</feature>
<feature type="helix" evidence="6">
    <location>
        <begin position="297"/>
        <end position="299"/>
    </location>
</feature>
<feature type="helix" evidence="6">
    <location>
        <begin position="302"/>
        <end position="321"/>
    </location>
</feature>
<feature type="helix" evidence="6">
    <location>
        <begin position="329"/>
        <end position="347"/>
    </location>
</feature>
<feature type="helix" evidence="6">
    <location>
        <begin position="352"/>
        <end position="356"/>
    </location>
</feature>
<sequence length="400" mass="44245">MQSVDVAIVGGGMVGLAVACGLQGSGLRVAVLEQRVQEPLAANAPPQLRVSAINAASEKLLTRLGVWQDILSRRASCYHGMEVWDKDSFGHISFDDQSMGYSHLGHIVENSVIHYALWNKAHQSSDITLLAPAELQQVAWGENETFLTLKDGSMLTARLVIGADGANSWLRNKADIPLTFWDYQHHALVATIRTEEPHDAVARQVFHGEGILAFLPLSDPHLCSIVWSLSPEEAQRMQQASEDEFNRALNIAFDNRLGLCKVESARQVFPLTGRYARQFASHRLALVGDAAHTIHPLAGQGVNLGFMDAAELIAELKRLHRQGKDIGQYIYLRRYERSRKHSAALMLAGMQGFRDLFSGTNPAKKLLRDIGLKLADTLPGVKPQLIRQAMGLNDLPEWLR</sequence>
<keyword id="KW-0002">3D-structure</keyword>
<keyword id="KW-0963">Cytoplasm</keyword>
<keyword id="KW-0274">FAD</keyword>
<keyword id="KW-0285">Flavoprotein</keyword>
<keyword id="KW-0503">Monooxygenase</keyword>
<keyword id="KW-0560">Oxidoreductase</keyword>
<keyword id="KW-1185">Reference proteome</keyword>
<keyword id="KW-0831">Ubiquinone biosynthesis</keyword>
<accession>P25535</accession>
<accession>Q2M9T5</accession>
<evidence type="ECO:0000269" key="1">
    <source>
    </source>
</evidence>
<evidence type="ECO:0000269" key="2">
    <source>
    </source>
</evidence>
<evidence type="ECO:0000303" key="3">
    <source>
    </source>
</evidence>
<evidence type="ECO:0000305" key="4"/>
<evidence type="ECO:0000305" key="5">
    <source>
    </source>
</evidence>
<evidence type="ECO:0007829" key="6">
    <source>
        <dbReference type="PDB" id="4K22"/>
    </source>
</evidence>
<dbReference type="EC" id="1.14.13.240" evidence="1"/>
<dbReference type="EMBL" id="D90281">
    <property type="protein sequence ID" value="BAA14327.1"/>
    <property type="molecule type" value="Genomic_DNA"/>
</dbReference>
<dbReference type="EMBL" id="U28377">
    <property type="protein sequence ID" value="AAA69074.1"/>
    <property type="molecule type" value="Genomic_DNA"/>
</dbReference>
<dbReference type="EMBL" id="U00096">
    <property type="protein sequence ID" value="AAC75944.1"/>
    <property type="molecule type" value="Genomic_DNA"/>
</dbReference>
<dbReference type="EMBL" id="AP009048">
    <property type="protein sequence ID" value="BAE76971.1"/>
    <property type="molecule type" value="Genomic_DNA"/>
</dbReference>
<dbReference type="PIR" id="B65075">
    <property type="entry name" value="B65075"/>
</dbReference>
<dbReference type="RefSeq" id="NP_417382.1">
    <property type="nucleotide sequence ID" value="NC_000913.3"/>
</dbReference>
<dbReference type="RefSeq" id="WP_001192229.1">
    <property type="nucleotide sequence ID" value="NZ_LN832404.1"/>
</dbReference>
<dbReference type="PDB" id="4K22">
    <property type="method" value="X-ray"/>
    <property type="resolution" value="2.00 A"/>
    <property type="chains" value="A/B=1-365"/>
</dbReference>
<dbReference type="PDBsum" id="4K22"/>
<dbReference type="SMR" id="P25535"/>
<dbReference type="BioGRID" id="4262344">
    <property type="interactions" value="13"/>
</dbReference>
<dbReference type="BioGRID" id="851711">
    <property type="interactions" value="1"/>
</dbReference>
<dbReference type="FunCoup" id="P25535">
    <property type="interactions" value="585"/>
</dbReference>
<dbReference type="IntAct" id="P25535">
    <property type="interactions" value="3"/>
</dbReference>
<dbReference type="STRING" id="511145.b2906"/>
<dbReference type="jPOST" id="P25535"/>
<dbReference type="PaxDb" id="511145-b2906"/>
<dbReference type="EnsemblBacteria" id="AAC75944">
    <property type="protein sequence ID" value="AAC75944"/>
    <property type="gene ID" value="b2906"/>
</dbReference>
<dbReference type="GeneID" id="947389"/>
<dbReference type="KEGG" id="ecj:JW2874"/>
<dbReference type="KEGG" id="eco:b2906"/>
<dbReference type="KEGG" id="ecoc:C3026_15930"/>
<dbReference type="PATRIC" id="fig|511145.12.peg.3001"/>
<dbReference type="EchoBASE" id="EB1309"/>
<dbReference type="eggNOG" id="COG0654">
    <property type="taxonomic scope" value="Bacteria"/>
</dbReference>
<dbReference type="HOGENOM" id="CLU_009665_8_3_6"/>
<dbReference type="InParanoid" id="P25535"/>
<dbReference type="OMA" id="VKQMQVW"/>
<dbReference type="OrthoDB" id="9769565at2"/>
<dbReference type="PhylomeDB" id="P25535"/>
<dbReference type="BioCyc" id="EcoCyc:EG11333-MONOMER"/>
<dbReference type="BioCyc" id="MetaCyc:EG11333-MONOMER"/>
<dbReference type="BRENDA" id="1.14.13.240">
    <property type="organism ID" value="2026"/>
</dbReference>
<dbReference type="UniPathway" id="UPA00232"/>
<dbReference type="EvolutionaryTrace" id="P25535"/>
<dbReference type="PHI-base" id="PHI:7028"/>
<dbReference type="PRO" id="PR:P25535"/>
<dbReference type="Proteomes" id="UP000000625">
    <property type="component" value="Chromosome"/>
</dbReference>
<dbReference type="GO" id="GO:0005737">
    <property type="term" value="C:cytoplasm"/>
    <property type="evidence" value="ECO:0007669"/>
    <property type="project" value="UniProtKB-SubCell"/>
</dbReference>
<dbReference type="GO" id="GO:0110142">
    <property type="term" value="C:ubiquinone biosynthesis complex"/>
    <property type="evidence" value="ECO:0000314"/>
    <property type="project" value="EcoCyc"/>
</dbReference>
<dbReference type="GO" id="GO:0019168">
    <property type="term" value="F:2-polyprenylphenol 6-hydroxylase activity"/>
    <property type="evidence" value="ECO:0000315"/>
    <property type="project" value="EcoCyc"/>
</dbReference>
<dbReference type="GO" id="GO:0071949">
    <property type="term" value="F:FAD binding"/>
    <property type="evidence" value="ECO:0007669"/>
    <property type="project" value="InterPro"/>
</dbReference>
<dbReference type="GO" id="GO:0006744">
    <property type="term" value="P:ubiquinone biosynthetic process"/>
    <property type="evidence" value="ECO:0000315"/>
    <property type="project" value="EcoCyc"/>
</dbReference>
<dbReference type="FunFam" id="3.50.50.60:FF:000048">
    <property type="entry name" value="2-octaprenyl-3-methyl-6-methoxy-1,4-benzoquinol hydroxylase"/>
    <property type="match status" value="1"/>
</dbReference>
<dbReference type="FunFam" id="3.50.50.60:FF:000062">
    <property type="entry name" value="FAD-dependent 2-octaprenylphenol hydroxylase"/>
    <property type="match status" value="1"/>
</dbReference>
<dbReference type="Gene3D" id="3.50.50.60">
    <property type="entry name" value="FAD/NAD(P)-binding domain"/>
    <property type="match status" value="2"/>
</dbReference>
<dbReference type="InterPro" id="IPR002938">
    <property type="entry name" value="FAD-bd"/>
</dbReference>
<dbReference type="InterPro" id="IPR036188">
    <property type="entry name" value="FAD/NAD-bd_sf"/>
</dbReference>
<dbReference type="InterPro" id="IPR018168">
    <property type="entry name" value="Ubi_Hdrlase_CS"/>
</dbReference>
<dbReference type="InterPro" id="IPR010971">
    <property type="entry name" value="UbiH/COQ6"/>
</dbReference>
<dbReference type="InterPro" id="IPR051205">
    <property type="entry name" value="UbiH/COQ6_monooxygenase"/>
</dbReference>
<dbReference type="NCBIfam" id="NF005949">
    <property type="entry name" value="PRK08013.1"/>
    <property type="match status" value="1"/>
</dbReference>
<dbReference type="NCBIfam" id="TIGR01988">
    <property type="entry name" value="Ubi-OHases"/>
    <property type="match status" value="1"/>
</dbReference>
<dbReference type="PANTHER" id="PTHR43876">
    <property type="entry name" value="UBIQUINONE BIOSYNTHESIS MONOOXYGENASE COQ6, MITOCHONDRIAL"/>
    <property type="match status" value="1"/>
</dbReference>
<dbReference type="PANTHER" id="PTHR43876:SF7">
    <property type="entry name" value="UBIQUINONE BIOSYNTHESIS MONOOXYGENASE COQ6, MITOCHONDRIAL"/>
    <property type="match status" value="1"/>
</dbReference>
<dbReference type="Pfam" id="PF01494">
    <property type="entry name" value="FAD_binding_3"/>
    <property type="match status" value="1"/>
</dbReference>
<dbReference type="PRINTS" id="PR00420">
    <property type="entry name" value="RNGMNOXGNASE"/>
</dbReference>
<dbReference type="SUPFAM" id="SSF51905">
    <property type="entry name" value="FAD/NAD(P)-binding domain"/>
    <property type="match status" value="1"/>
</dbReference>
<dbReference type="PROSITE" id="PS01304">
    <property type="entry name" value="UBIH"/>
    <property type="match status" value="1"/>
</dbReference>
<reference key="1">
    <citation type="journal article" date="1992" name="J. Bacteriol.">
        <title>Isolation and characterization of a light-sensitive mutant of Escherichia coli K-12 with a mutation in a gene that is required for the biosynthesis of ubiquinone.</title>
        <authorList>
            <person name="Nakahigashi K."/>
            <person name="Miyamoto K."/>
            <person name="Nishimura K."/>
            <person name="Inokuchi H."/>
        </authorList>
    </citation>
    <scope>NUCLEOTIDE SEQUENCE [GENOMIC DNA]</scope>
    <source>
        <strain>ATCC 33694 / HB101</strain>
    </source>
</reference>
<reference key="2">
    <citation type="journal article" date="1997" name="Science">
        <title>The complete genome sequence of Escherichia coli K-12.</title>
        <authorList>
            <person name="Blattner F.R."/>
            <person name="Plunkett G. III"/>
            <person name="Bloch C.A."/>
            <person name="Perna N.T."/>
            <person name="Burland V."/>
            <person name="Riley M."/>
            <person name="Collado-Vides J."/>
            <person name="Glasner J.D."/>
            <person name="Rode C.K."/>
            <person name="Mayhew G.F."/>
            <person name="Gregor J."/>
            <person name="Davis N.W."/>
            <person name="Kirkpatrick H.A."/>
            <person name="Goeden M.A."/>
            <person name="Rose D.J."/>
            <person name="Mau B."/>
            <person name="Shao Y."/>
        </authorList>
    </citation>
    <scope>NUCLEOTIDE SEQUENCE [LARGE SCALE GENOMIC DNA]</scope>
    <source>
        <strain>K12 / MG1655 / ATCC 47076</strain>
    </source>
</reference>
<reference key="3">
    <citation type="journal article" date="2006" name="Mol. Syst. Biol.">
        <title>Highly accurate genome sequences of Escherichia coli K-12 strains MG1655 and W3110.</title>
        <authorList>
            <person name="Hayashi K."/>
            <person name="Morooka N."/>
            <person name="Yamamoto Y."/>
            <person name="Fujita K."/>
            <person name="Isono K."/>
            <person name="Choi S."/>
            <person name="Ohtsubo E."/>
            <person name="Baba T."/>
            <person name="Wanner B.L."/>
            <person name="Mori H."/>
            <person name="Horiuchi T."/>
        </authorList>
    </citation>
    <scope>NUCLEOTIDE SEQUENCE [LARGE SCALE GENOMIC DNA]</scope>
    <source>
        <strain>K12 / W3110 / ATCC 27325 / DSM 5911</strain>
    </source>
</reference>
<reference key="4">
    <citation type="journal article" date="2019" name="Cell Chem. Biol.">
        <title>A soluble metabolon synthesizes the isoprenoid lipid ubiquinone.</title>
        <authorList>
            <person name="Hajj Chehade M."/>
            <person name="Pelosi L."/>
            <person name="Fyfe C.D."/>
            <person name="Loiseau L."/>
            <person name="Rascalou B."/>
            <person name="Brugiere S."/>
            <person name="Kazemzadeh K."/>
            <person name="Vo C.D."/>
            <person name="Ciccone L."/>
            <person name="Aussel L."/>
            <person name="Coute Y."/>
            <person name="Fontecave M."/>
            <person name="Barras F."/>
            <person name="Lombard M."/>
            <person name="Pierrel F."/>
        </authorList>
    </citation>
    <scope>SUBUNIT</scope>
    <scope>SUBCELLULAR LOCATION</scope>
</reference>
<reference key="5">
    <citation type="journal article" date="2013" name="J. Biol. Chem.">
        <title>ubiI, a new gene in Escherichia coli coenzyme Q biosynthesis, is involved in aerobic C5-hydroxylation.</title>
        <authorList>
            <person name="Hajj Chehade M."/>
            <person name="Loiseau L."/>
            <person name="Lombard M."/>
            <person name="Pecqueur L."/>
            <person name="Ismail A."/>
            <person name="Smadja M."/>
            <person name="Golinelli-Pimpaneau B."/>
            <person name="Mellot-Draznieks C."/>
            <person name="Hamelin O."/>
            <person name="Aussel L."/>
            <person name="Kieffer-Jaquinod S."/>
            <person name="Labessan N."/>
            <person name="Barras F."/>
            <person name="Fontecave M."/>
            <person name="Pierrel F."/>
        </authorList>
    </citation>
    <scope>X-RAY CRYSTALLOGRAPHY (2.0 ANGSTROMS) OF 1-365</scope>
    <scope>FUNCTION AS A 2-OCTAPRENYLPHENOL HYDROXYLASE</scope>
    <scope>CATALYTIC ACTIVITY</scope>
    <scope>ROLE IN UBIQUINONE BIOSYNTHESIS</scope>
    <scope>GENE NAME</scope>
    <scope>COFACTOR</scope>
    <scope>DISRUPTION PHENOTYPE</scope>
    <scope>PATHWAY</scope>
    <scope>SUBUNIT</scope>
    <scope>MUTAGENESIS OF 301-GLY--ASN-303</scope>
    <source>
        <strain>K12</strain>
    </source>
</reference>
<gene>
    <name evidence="3" type="primary">ubiI</name>
    <name type="synonym">visC</name>
    <name type="ordered locus">b2906</name>
    <name type="ordered locus">JW2874</name>
</gene>
<proteinExistence type="evidence at protein level"/>
<organism>
    <name type="scientific">Escherichia coli (strain K12)</name>
    <dbReference type="NCBI Taxonomy" id="83333"/>
    <lineage>
        <taxon>Bacteria</taxon>
        <taxon>Pseudomonadati</taxon>
        <taxon>Pseudomonadota</taxon>
        <taxon>Gammaproteobacteria</taxon>
        <taxon>Enterobacterales</taxon>
        <taxon>Enterobacteriaceae</taxon>
        <taxon>Escherichia</taxon>
    </lineage>
</organism>
<name>UBII_ECOLI</name>